<protein>
    <recommendedName>
        <fullName>Klotho</fullName>
        <ecNumber>3.2.1.31</ecNumber>
    </recommendedName>
    <component>
        <recommendedName>
            <fullName>Klotho peptide</fullName>
        </recommendedName>
    </component>
</protein>
<comment type="function">
    <text evidence="1">May have weak glycosidase activity towards glucuronylated steroids. However, it lacks essential active site Glu residues at positions 241 and 874, suggesting it may be inactive as a glycosidase in vivo. May be involved in the regulation of calcium and phosphorus homeostasis by inhibiting the synthesis of active vitamin D (By similarity). Essential factor for the specific interaction between FGF23 and FGFR1 (By similarity).</text>
</comment>
<comment type="function">
    <text evidence="1">The Klotho peptide generated by cleavage of the membrane-bound isoform may be an anti-aging circulating hormone which would extend life span by inhibiting insulin/IGF1 signaling.</text>
</comment>
<comment type="catalytic activity">
    <reaction>
        <text>a beta-D-glucuronoside + H2O = D-glucuronate + an alcohol</text>
        <dbReference type="Rhea" id="RHEA:17633"/>
        <dbReference type="ChEBI" id="CHEBI:15377"/>
        <dbReference type="ChEBI" id="CHEBI:30879"/>
        <dbReference type="ChEBI" id="CHEBI:58720"/>
        <dbReference type="ChEBI" id="CHEBI:83411"/>
        <dbReference type="EC" id="3.2.1.31"/>
    </reaction>
</comment>
<comment type="subunit">
    <text evidence="1">Homodimer. Interacts with FGF23 and FGFR1.</text>
</comment>
<comment type="subcellular location">
    <subcellularLocation>
        <location evidence="2">Cell membrane</location>
        <topology evidence="2">Single-pass type I membrane protein</topology>
    </subcellularLocation>
    <subcellularLocation>
        <location evidence="2">Apical cell membrane</location>
        <topology evidence="2">Single-pass type I membrane protein</topology>
    </subcellularLocation>
    <text evidence="2">Its shedding leads to a soluble peptide.</text>
</comment>
<comment type="subcellular location">
    <molecule>Klotho peptide</molecule>
    <subcellularLocation>
        <location evidence="2">Secreted</location>
    </subcellularLocation>
</comment>
<comment type="tissue specificity">
    <text evidence="4 8 10">Present in cortical renal tubules and the parathyroid (at protein level). Strongly expressed in kidney. Expressed at low levels in brain, lung, intestine and ovaries.</text>
</comment>
<comment type="developmental stage">
    <text evidence="10">Expressed faintly from 18 dpc in the kidney. Expression increases in the kidney after 4 days of age.</text>
</comment>
<comment type="induction">
    <text evidence="5 6 7 9 10">Down-regulated by angiotensin II and iron overload (at protein level). Down-regulated by acute inflammatory stress, and in models for long-term hypertension, diabetes mellitus and chronic renal failure.</text>
</comment>
<comment type="domain">
    <text>Contains 2 glycosyl hydrolase 1 regions. However, the first region lacks the essential Glu active site residue at position 241, and the second one lacks the essential Glu active site residue at position 874.</text>
</comment>
<comment type="PTM">
    <text evidence="1">N-glycosylated.</text>
</comment>
<comment type="similarity">
    <text evidence="11">Belongs to the glycosyl hydrolase 1 family. Klotho subfamily.</text>
</comment>
<comment type="online information" name="Protein Spotlight">
    <link uri="https://www.proteinspotlight.org/back_issues/065"/>
    <text>The thread of life - Issue 65 of December 2005</text>
</comment>
<name>KLOT_RAT</name>
<feature type="signal peptide" evidence="3">
    <location>
        <begin position="1"/>
        <end position="34"/>
    </location>
</feature>
<feature type="chain" id="PRO_0000042249" description="Klotho">
    <location>
        <begin position="35"/>
        <end position="1014"/>
    </location>
</feature>
<feature type="chain" id="PRO_0000042250" description="Klotho peptide" evidence="1">
    <location>
        <begin position="35"/>
        <end status="unknown"/>
    </location>
</feature>
<feature type="topological domain" description="Extracellular" evidence="3">
    <location>
        <begin position="35"/>
        <end position="983"/>
    </location>
</feature>
<feature type="transmembrane region" description="Helical" evidence="3">
    <location>
        <begin position="984"/>
        <end position="1004"/>
    </location>
</feature>
<feature type="topological domain" description="Cytoplasmic" evidence="3">
    <location>
        <begin position="1005"/>
        <end position="1014"/>
    </location>
</feature>
<feature type="region of interest" description="Glycosyl hydrolase-1 1">
    <location>
        <begin position="59"/>
        <end position="508"/>
    </location>
</feature>
<feature type="region of interest" description="Glycosyl hydrolase-1 2">
    <location>
        <begin position="517"/>
        <end position="955"/>
    </location>
</feature>
<feature type="glycosylation site" description="N-linked (GlcNAc...) asparagine" evidence="3">
    <location>
        <position position="161"/>
    </location>
</feature>
<feature type="glycosylation site" description="N-linked (GlcNAc...) asparagine" evidence="3">
    <location>
        <position position="285"/>
    </location>
</feature>
<feature type="glycosylation site" description="N-linked (GlcNAc...) asparagine" evidence="3">
    <location>
        <position position="346"/>
    </location>
</feature>
<feature type="glycosylation site" description="N-linked (GlcNAc...) asparagine" evidence="3">
    <location>
        <position position="609"/>
    </location>
</feature>
<feature type="glycosylation site" description="N-linked (GlcNAc...) asparagine" evidence="3">
    <location>
        <position position="614"/>
    </location>
</feature>
<feature type="glycosylation site" description="N-linked (GlcNAc...) asparagine" evidence="3">
    <location>
        <position position="696"/>
    </location>
</feature>
<keyword id="KW-1003">Cell membrane</keyword>
<keyword id="KW-0325">Glycoprotein</keyword>
<keyword id="KW-0326">Glycosidase</keyword>
<keyword id="KW-0378">Hydrolase</keyword>
<keyword id="KW-0472">Membrane</keyword>
<keyword id="KW-1185">Reference proteome</keyword>
<keyword id="KW-0677">Repeat</keyword>
<keyword id="KW-0964">Secreted</keyword>
<keyword id="KW-0732">Signal</keyword>
<keyword id="KW-0812">Transmembrane</keyword>
<keyword id="KW-1133">Transmembrane helix</keyword>
<gene>
    <name type="primary">Kl</name>
</gene>
<reference key="1">
    <citation type="journal article" date="1998" name="Biochem. Biophys. Res. Commun.">
        <title>Molecular cloning of rat klotho cDNA: markedly decreased expression of klotho by acute inflammatory stress.</title>
        <authorList>
            <person name="Ohyama Y."/>
            <person name="Kurabayashi M."/>
            <person name="Masuda H."/>
            <person name="Nakamura T."/>
            <person name="Aihara Y."/>
            <person name="Kaname T."/>
            <person name="Suga T."/>
            <person name="Arai M."/>
            <person name="Aizawa H."/>
            <person name="Matsumura Y."/>
            <person name="Kuro-o M."/>
            <person name="Nabeshima Y."/>
            <person name="Nagai R."/>
        </authorList>
    </citation>
    <scope>NUCLEOTIDE SEQUENCE [MRNA]</scope>
    <scope>TISSUE SPECIFICITY</scope>
    <scope>INDUCTION</scope>
    <scope>DEVELOPMENTAL STAGE</scope>
    <source>
        <tissue>Lung</tissue>
    </source>
</reference>
<reference key="2">
    <citation type="journal article" date="1998" name="Biochem. Biophys. Res. Commun.">
        <title>Downregulation of the Klotho gene in the kidney under sustained circulatory stress in rats.</title>
        <authorList>
            <person name="Aizawa H."/>
            <person name="Saito Y."/>
            <person name="Nakamura T."/>
            <person name="Inoue M."/>
            <person name="Imanari T."/>
            <person name="Ohyama Y."/>
            <person name="Matsumura Y."/>
            <person name="Masuda H."/>
            <person name="Oba S."/>
            <person name="Mise N."/>
            <person name="Kimura K."/>
            <person name="Hasegawa A."/>
            <person name="Kurabayashi M."/>
            <person name="Kuro-o M."/>
            <person name="Nabeshima Y."/>
            <person name="Nagai R."/>
        </authorList>
    </citation>
    <scope>INDUCTION</scope>
</reference>
<reference key="3">
    <citation type="journal article" date="2000" name="Biochem. Biophys. Res. Commun.">
        <title>Establishment of the anti-Klotho monoclonal antibodies and detection of Klotho protein in kidneys.</title>
        <authorList>
            <person name="Kato Y."/>
            <person name="Arakawa E."/>
            <person name="Kinoshita S."/>
            <person name="Shirai A."/>
            <person name="Furuya A."/>
            <person name="Yamano K."/>
            <person name="Nakamura K."/>
            <person name="Iida A."/>
            <person name="Anazawa H."/>
            <person name="Koh N."/>
            <person name="Iwano A."/>
            <person name="Imura A."/>
            <person name="Fujimori T."/>
            <person name="Kuro-o M."/>
            <person name="Hanai N."/>
            <person name="Takeshige K."/>
            <person name="Nabeshima Y."/>
        </authorList>
    </citation>
    <scope>TISSUE SPECIFICITY</scope>
</reference>
<reference key="4">
    <citation type="journal article" date="2000" name="Cell. Mol. Life Sci.">
        <title>Endothelial dysfunction in the klotho mouse and downregulation of klotho gene expression in various animal models of vascular and metabolic diseases.</title>
        <authorList>
            <person name="Nagai R."/>
            <person name="Saito Y."/>
            <person name="Ohyama Y."/>
            <person name="Aizawa H."/>
            <person name="Suga T."/>
            <person name="Nakamura T."/>
            <person name="Kurabayashi M."/>
            <person name="Kuroo M."/>
        </authorList>
    </citation>
    <scope>INDUCTION</scope>
</reference>
<reference key="5">
    <citation type="journal article" date="2002" name="Hypertension">
        <title>In vivo klotho gene transfer ameliorates angiotensin II-induced renal damage.</title>
        <authorList>
            <person name="Mitani H."/>
            <person name="Ishizaka N."/>
            <person name="Aizawa T."/>
            <person name="Ohno M."/>
            <person name="Usui S."/>
            <person name="Suzuki T."/>
            <person name="Amaki T."/>
            <person name="Mori I."/>
            <person name="Nakamura Y."/>
            <person name="Sato M."/>
            <person name="Nangaku M."/>
            <person name="Hirata Y."/>
            <person name="Nagai R."/>
        </authorList>
    </citation>
    <scope>INDUCTION</scope>
</reference>
<reference key="6">
    <citation type="journal article" date="2003" name="FEBS Lett.">
        <title>Iron chelation and a free radical scavenger suppress angiotensin II-induced downregulation of klotho, an anti-aging gene, in rat.</title>
        <authorList>
            <person name="Saito K."/>
            <person name="Ishizaka N."/>
            <person name="Mitani H."/>
            <person name="Ohno M."/>
            <person name="Nagai R."/>
        </authorList>
    </citation>
    <scope>INDUCTION</scope>
</reference>
<reference key="7">
    <citation type="journal article" date="2007" name="J. Clin. Invest.">
        <title>The parathyroid is a target organ for FGF23 in rats.</title>
        <authorList>
            <person name="Ben-Dov I.Z."/>
            <person name="Galitzer H."/>
            <person name="Lavi-Moshayoff V."/>
            <person name="Goetz R."/>
            <person name="Kuro-o M."/>
            <person name="Mohammadi M."/>
            <person name="Sirkis R."/>
            <person name="Naveh-Many T."/>
            <person name="Silver J."/>
        </authorList>
    </citation>
    <scope>TISSUE SPECIFICITY</scope>
</reference>
<organism>
    <name type="scientific">Rattus norvegicus</name>
    <name type="common">Rat</name>
    <dbReference type="NCBI Taxonomy" id="10116"/>
    <lineage>
        <taxon>Eukaryota</taxon>
        <taxon>Metazoa</taxon>
        <taxon>Chordata</taxon>
        <taxon>Craniata</taxon>
        <taxon>Vertebrata</taxon>
        <taxon>Euteleostomi</taxon>
        <taxon>Mammalia</taxon>
        <taxon>Eutheria</taxon>
        <taxon>Euarchontoglires</taxon>
        <taxon>Glires</taxon>
        <taxon>Rodentia</taxon>
        <taxon>Myomorpha</taxon>
        <taxon>Muroidea</taxon>
        <taxon>Muridae</taxon>
        <taxon>Murinae</taxon>
        <taxon>Rattus</taxon>
    </lineage>
</organism>
<evidence type="ECO:0000250" key="1"/>
<evidence type="ECO:0000250" key="2">
    <source>
        <dbReference type="UniProtKB" id="O35082"/>
    </source>
</evidence>
<evidence type="ECO:0000255" key="3"/>
<evidence type="ECO:0000269" key="4">
    <source>
    </source>
</evidence>
<evidence type="ECO:0000269" key="5">
    <source>
    </source>
</evidence>
<evidence type="ECO:0000269" key="6">
    <source>
    </source>
</evidence>
<evidence type="ECO:0000269" key="7">
    <source>
    </source>
</evidence>
<evidence type="ECO:0000269" key="8">
    <source>
    </source>
</evidence>
<evidence type="ECO:0000269" key="9">
    <source>
    </source>
</evidence>
<evidence type="ECO:0000269" key="10">
    <source>
    </source>
</evidence>
<evidence type="ECO:0000305" key="11"/>
<dbReference type="EC" id="3.2.1.31"/>
<dbReference type="EMBL" id="AB017820">
    <property type="protein sequence ID" value="BAA34740.1"/>
    <property type="molecule type" value="mRNA"/>
</dbReference>
<dbReference type="PIR" id="JE0333">
    <property type="entry name" value="JE0333"/>
</dbReference>
<dbReference type="RefSeq" id="NP_112626.1">
    <property type="nucleotide sequence ID" value="NM_031336.2"/>
</dbReference>
<dbReference type="SMR" id="Q9Z2Y9"/>
<dbReference type="FunCoup" id="Q9Z2Y9">
    <property type="interactions" value="99"/>
</dbReference>
<dbReference type="STRING" id="10116.ENSRNOP00000001449"/>
<dbReference type="CAZy" id="GH1">
    <property type="family name" value="Glycoside Hydrolase Family 1"/>
</dbReference>
<dbReference type="GlyCosmos" id="Q9Z2Y9">
    <property type="glycosylation" value="6 sites, No reported glycans"/>
</dbReference>
<dbReference type="GlyGen" id="Q9Z2Y9">
    <property type="glycosylation" value="6 sites"/>
</dbReference>
<dbReference type="PhosphoSitePlus" id="Q9Z2Y9"/>
<dbReference type="PaxDb" id="10116-ENSRNOP00000001449"/>
<dbReference type="ABCD" id="Q9Z2Y9">
    <property type="antibodies" value="1 sequenced antibody"/>
</dbReference>
<dbReference type="Ensembl" id="ENSRNOT00000001449.5">
    <property type="protein sequence ID" value="ENSRNOP00000001449.3"/>
    <property type="gene ID" value="ENSRNOG00000001092.6"/>
</dbReference>
<dbReference type="GeneID" id="83504"/>
<dbReference type="KEGG" id="rno:83504"/>
<dbReference type="UCSC" id="RGD:620396">
    <property type="organism name" value="rat"/>
</dbReference>
<dbReference type="AGR" id="RGD:620396"/>
<dbReference type="CTD" id="9365"/>
<dbReference type="RGD" id="620396">
    <property type="gene designation" value="Kl"/>
</dbReference>
<dbReference type="eggNOG" id="KOG0626">
    <property type="taxonomic scope" value="Eukaryota"/>
</dbReference>
<dbReference type="GeneTree" id="ENSGT00940000157614"/>
<dbReference type="HOGENOM" id="CLU_001859_5_2_1"/>
<dbReference type="InParanoid" id="Q9Z2Y9"/>
<dbReference type="OMA" id="RKPHCVD"/>
<dbReference type="OrthoDB" id="27612at9989"/>
<dbReference type="PhylomeDB" id="Q9Z2Y9"/>
<dbReference type="TreeFam" id="TF314803"/>
<dbReference type="Reactome" id="R-RNO-109704">
    <property type="pathway name" value="PI3K Cascade"/>
</dbReference>
<dbReference type="Reactome" id="R-RNO-1257604">
    <property type="pathway name" value="PIP3 activates AKT signaling"/>
</dbReference>
<dbReference type="Reactome" id="R-RNO-190374">
    <property type="pathway name" value="FGFR1c and Klotho ligand binding and activation"/>
</dbReference>
<dbReference type="Reactome" id="R-RNO-5654219">
    <property type="pathway name" value="Phospholipase C-mediated cascade: FGFR1"/>
</dbReference>
<dbReference type="Reactome" id="R-RNO-5654687">
    <property type="pathway name" value="Downstream signaling of activated FGFR1"/>
</dbReference>
<dbReference type="Reactome" id="R-RNO-5654688">
    <property type="pathway name" value="SHC-mediated cascade:FGFR1"/>
</dbReference>
<dbReference type="Reactome" id="R-RNO-5654689">
    <property type="pathway name" value="PI-3K cascade:FGFR1"/>
</dbReference>
<dbReference type="Reactome" id="R-RNO-5654693">
    <property type="pathway name" value="FRS-mediated FGFR1 signaling"/>
</dbReference>
<dbReference type="Reactome" id="R-RNO-5654726">
    <property type="pathway name" value="Negative regulation of FGFR1 signaling"/>
</dbReference>
<dbReference type="Reactome" id="R-RNO-5673001">
    <property type="pathway name" value="RAF/MAP kinase cascade"/>
</dbReference>
<dbReference type="Reactome" id="R-RNO-6811558">
    <property type="pathway name" value="PI5P, PP2A and IER3 Regulate PI3K/AKT Signaling"/>
</dbReference>
<dbReference type="PRO" id="PR:Q9Z2Y9"/>
<dbReference type="Proteomes" id="UP000002494">
    <property type="component" value="Chromosome 12"/>
</dbReference>
<dbReference type="GO" id="GO:0016324">
    <property type="term" value="C:apical plasma membrane"/>
    <property type="evidence" value="ECO:0007669"/>
    <property type="project" value="UniProtKB-SubCell"/>
</dbReference>
<dbReference type="GO" id="GO:0005576">
    <property type="term" value="C:extracellular region"/>
    <property type="evidence" value="ECO:0007669"/>
    <property type="project" value="UniProtKB-SubCell"/>
</dbReference>
<dbReference type="GO" id="GO:0004566">
    <property type="term" value="F:beta-glucuronidase activity"/>
    <property type="evidence" value="ECO:0007669"/>
    <property type="project" value="UniProtKB-EC"/>
</dbReference>
<dbReference type="GO" id="GO:0017134">
    <property type="term" value="F:fibroblast growth factor binding"/>
    <property type="evidence" value="ECO:0000266"/>
    <property type="project" value="RGD"/>
</dbReference>
<dbReference type="GO" id="GO:0005104">
    <property type="term" value="F:fibroblast growth factor receptor binding"/>
    <property type="evidence" value="ECO:0000266"/>
    <property type="project" value="RGD"/>
</dbReference>
<dbReference type="GO" id="GO:0055074">
    <property type="term" value="P:calcium ion homeostasis"/>
    <property type="evidence" value="ECO:0000266"/>
    <property type="project" value="RGD"/>
</dbReference>
<dbReference type="GO" id="GO:0005975">
    <property type="term" value="P:carbohydrate metabolic process"/>
    <property type="evidence" value="ECO:0007669"/>
    <property type="project" value="InterPro"/>
</dbReference>
<dbReference type="GO" id="GO:0008340">
    <property type="term" value="P:determination of adult lifespan"/>
    <property type="evidence" value="ECO:0000266"/>
    <property type="project" value="RGD"/>
</dbReference>
<dbReference type="GO" id="GO:0006112">
    <property type="term" value="P:energy reserve metabolic process"/>
    <property type="evidence" value="ECO:0000266"/>
    <property type="project" value="RGD"/>
</dbReference>
<dbReference type="GO" id="GO:0008543">
    <property type="term" value="P:fibroblast growth factor receptor signaling pathway"/>
    <property type="evidence" value="ECO:0000318"/>
    <property type="project" value="GO_Central"/>
</dbReference>
<dbReference type="GO" id="GO:0003085">
    <property type="term" value="P:negative regulation of systemic arterial blood pressure"/>
    <property type="evidence" value="ECO:0000315"/>
    <property type="project" value="RGD"/>
</dbReference>
<dbReference type="GO" id="GO:0042421">
    <property type="term" value="P:norepinephrine biosynthetic process"/>
    <property type="evidence" value="ECO:0000315"/>
    <property type="project" value="RGD"/>
</dbReference>
<dbReference type="GO" id="GO:0030501">
    <property type="term" value="P:positive regulation of bone mineralization"/>
    <property type="evidence" value="ECO:0000266"/>
    <property type="project" value="RGD"/>
</dbReference>
<dbReference type="GO" id="GO:0090080">
    <property type="term" value="P:positive regulation of MAPKKK cascade by fibroblast growth factor receptor signaling pathway"/>
    <property type="evidence" value="ECO:0000266"/>
    <property type="project" value="RGD"/>
</dbReference>
<dbReference type="GO" id="GO:0014823">
    <property type="term" value="P:response to activity"/>
    <property type="evidence" value="ECO:0000270"/>
    <property type="project" value="RGD"/>
</dbReference>
<dbReference type="GO" id="GO:1990776">
    <property type="term" value="P:response to angiotensin"/>
    <property type="evidence" value="ECO:0000270"/>
    <property type="project" value="RGD"/>
</dbReference>
<dbReference type="GO" id="GO:0071774">
    <property type="term" value="P:response to fibroblast growth factor"/>
    <property type="evidence" value="ECO:0000270"/>
    <property type="project" value="RGD"/>
</dbReference>
<dbReference type="GO" id="GO:0033280">
    <property type="term" value="P:response to vitamin D"/>
    <property type="evidence" value="ECO:0000270"/>
    <property type="project" value="RGD"/>
</dbReference>
<dbReference type="FunFam" id="3.20.20.80:FF:000042">
    <property type="entry name" value="Klotho"/>
    <property type="match status" value="1"/>
</dbReference>
<dbReference type="FunFam" id="3.20.20.80:FF:000062">
    <property type="entry name" value="Klotho"/>
    <property type="match status" value="1"/>
</dbReference>
<dbReference type="Gene3D" id="3.20.20.80">
    <property type="entry name" value="Glycosidases"/>
    <property type="match status" value="2"/>
</dbReference>
<dbReference type="InterPro" id="IPR001360">
    <property type="entry name" value="Glyco_hydro_1"/>
</dbReference>
<dbReference type="InterPro" id="IPR033132">
    <property type="entry name" value="Glyco_hydro_1_N_CS"/>
</dbReference>
<dbReference type="InterPro" id="IPR017853">
    <property type="entry name" value="Glycoside_hydrolase_SF"/>
</dbReference>
<dbReference type="PANTHER" id="PTHR10353">
    <property type="entry name" value="GLYCOSYL HYDROLASE"/>
    <property type="match status" value="1"/>
</dbReference>
<dbReference type="PANTHER" id="PTHR10353:SF336">
    <property type="entry name" value="LACTASE-LIKE PROTEIN"/>
    <property type="match status" value="1"/>
</dbReference>
<dbReference type="Pfam" id="PF00232">
    <property type="entry name" value="Glyco_hydro_1"/>
    <property type="match status" value="3"/>
</dbReference>
<dbReference type="PRINTS" id="PR00131">
    <property type="entry name" value="GLHYDRLASE1"/>
</dbReference>
<dbReference type="SUPFAM" id="SSF51445">
    <property type="entry name" value="(Trans)glycosidases"/>
    <property type="match status" value="2"/>
</dbReference>
<dbReference type="PROSITE" id="PS00653">
    <property type="entry name" value="GLYCOSYL_HYDROL_F1_2"/>
    <property type="match status" value="1"/>
</dbReference>
<accession>Q9Z2Y9</accession>
<sequence>MPARAPPRRLPRLLLLRLLSLHLLLLTLRARCLSAEPGQGAQTWARFARPPVPEASGLLHDTFPDGFLWAVGSAAYQTEGGWRQHGKGASIWDTFTHHPRAIPEDSPIVMAPSGAPLPPLPSTGDVASDSYNNVYRDTEGLRELGVTHYRFSISWARVLPNGTAGTPNREGLRYYRRLLERLRELGVQPVVTLYHWDLPQRLQDTYGGWANRALADHFRDYAELCFRHFGGQVKYWITIDNPYVVAWHGYATGRLAPGVRGSSRLGYLVAHNLLLAHAKVWRLYNTSFRPTQGGRVSIALGSHWITPRRMTDYHIRECQKSLDFVLGWFAKPIFIDGDYPKSMKNNLSSLLPDFTESEKRFIRGTADFFALSFGPTLSFQLLDPSMKFRQLESPSLRQLLSWIDLEYNHPQIFIVENGWFVSGTTRRDDAKYMYYLKKFIMESLKAIRLDGVDVIGYTAWSLMDGFEWHRGYSIRRGLFYVDFLSQDKELLPKSSALFYQKLIENNGFPPLPENQPLEGTFPCDFAWGVVDNYIQVDPTLSQFTDPNVYLWDVHHSKRLIKVDGVVAKKRKPYCVDFSAIRPQITLLREMRVTHFRFSLDWALILPLGNQTQVNRTVLHFYRCMVSELVHANITPVVALWQPATPHQGLPHALAKHGAWENPHTALAFADYANLCFEELGHWVKFWITINEPNSRNMTYRAGHHLLKAHALAWHLYDDKFRAAQKGKISIALQVDWIEPACPFSQKDKEVAERVLEFDVGWLAEPIFGSGDYPHVMREWLNQKNNFLLPYFTEDEKKLIRGSFDFLALSHYTTILVDWEKEDPIKYNDYLEVQEMTDITWLNSPNQVAVVPWGLRKALNWLRFKYGDLPMFVTANGIDDDPHAEQDSLRMYYIKNYVNEALKAYVLDGINLCGYFAYSLSDRSVPKSGFYRYAANQFEPKPSIKHYRKIIDNNGFLGSGTLGRFCPEEYTVCTGCGFFQTRKSLLAFISFLVFAFVTSLALIYYYSKKGRRRYK</sequence>
<proteinExistence type="evidence at protein level"/>